<dbReference type="EC" id="2.8.3.18" evidence="1 2 4"/>
<dbReference type="EMBL" id="D13291">
    <property type="protein sequence ID" value="BAA02549.1"/>
    <property type="status" value="ALT_FRAME"/>
    <property type="molecule type" value="Genomic_DNA"/>
</dbReference>
<dbReference type="EMBL" id="DQ631551">
    <property type="protein sequence ID" value="ACD85596.1"/>
    <property type="molecule type" value="Genomic_DNA"/>
</dbReference>
<dbReference type="EMBL" id="JX475924">
    <property type="protein sequence ID" value="AGG68319.1"/>
    <property type="molecule type" value="Genomic_DNA"/>
</dbReference>
<dbReference type="EMBL" id="JX475925">
    <property type="protein sequence ID" value="AGG68324.1"/>
    <property type="molecule type" value="Genomic_DNA"/>
</dbReference>
<dbReference type="PIR" id="I39486">
    <property type="entry name" value="I39486"/>
</dbReference>
<dbReference type="PDB" id="4EU3">
    <property type="method" value="X-ray"/>
    <property type="resolution" value="1.58 A"/>
    <property type="chains" value="A/B=1-505"/>
</dbReference>
<dbReference type="PDB" id="4EU4">
    <property type="method" value="X-ray"/>
    <property type="resolution" value="2.80 A"/>
    <property type="chains" value="A/B=1-505"/>
</dbReference>
<dbReference type="PDB" id="4EU5">
    <property type="method" value="X-ray"/>
    <property type="resolution" value="1.74 A"/>
    <property type="chains" value="A/B=1-505"/>
</dbReference>
<dbReference type="PDB" id="4EU6">
    <property type="method" value="X-ray"/>
    <property type="resolution" value="1.99 A"/>
    <property type="chains" value="A/B=1-505"/>
</dbReference>
<dbReference type="PDB" id="4EU7">
    <property type="method" value="X-ray"/>
    <property type="resolution" value="1.70 A"/>
    <property type="chains" value="A/B=1-505"/>
</dbReference>
<dbReference type="PDB" id="4EU8">
    <property type="method" value="X-ray"/>
    <property type="resolution" value="1.81 A"/>
    <property type="chains" value="A/B=1-505"/>
</dbReference>
<dbReference type="PDB" id="4EU9">
    <property type="method" value="X-ray"/>
    <property type="resolution" value="1.48 A"/>
    <property type="chains" value="A/B=1-505"/>
</dbReference>
<dbReference type="PDB" id="4EUA">
    <property type="method" value="X-ray"/>
    <property type="resolution" value="2.40 A"/>
    <property type="chains" value="A/B=1-505"/>
</dbReference>
<dbReference type="PDB" id="4EUB">
    <property type="method" value="X-ray"/>
    <property type="resolution" value="1.97 A"/>
    <property type="chains" value="A/B=1-505"/>
</dbReference>
<dbReference type="PDB" id="4EUC">
    <property type="method" value="X-ray"/>
    <property type="resolution" value="2.64 A"/>
    <property type="chains" value="A/B=1-505"/>
</dbReference>
<dbReference type="PDB" id="4EUD">
    <property type="method" value="X-ray"/>
    <property type="resolution" value="1.95 A"/>
    <property type="chains" value="A/B=1-505"/>
</dbReference>
<dbReference type="PDB" id="5DDK">
    <property type="method" value="X-ray"/>
    <property type="resolution" value="2.13 A"/>
    <property type="chains" value="A/B=1-505"/>
</dbReference>
<dbReference type="PDB" id="5DW4">
    <property type="method" value="X-ray"/>
    <property type="resolution" value="1.62 A"/>
    <property type="chains" value="A/B=1-505"/>
</dbReference>
<dbReference type="PDB" id="5DW5">
    <property type="method" value="X-ray"/>
    <property type="resolution" value="1.66 A"/>
    <property type="chains" value="A/B=1-505"/>
</dbReference>
<dbReference type="PDB" id="5DW6">
    <property type="method" value="X-ray"/>
    <property type="resolution" value="1.55 A"/>
    <property type="chains" value="A/B=1-505"/>
</dbReference>
<dbReference type="PDB" id="5E5H">
    <property type="method" value="X-ray"/>
    <property type="resolution" value="2.05 A"/>
    <property type="chains" value="A/B=1-505"/>
</dbReference>
<dbReference type="PDBsum" id="4EU3"/>
<dbReference type="PDBsum" id="4EU4"/>
<dbReference type="PDBsum" id="4EU5"/>
<dbReference type="PDBsum" id="4EU6"/>
<dbReference type="PDBsum" id="4EU7"/>
<dbReference type="PDBsum" id="4EU8"/>
<dbReference type="PDBsum" id="4EU9"/>
<dbReference type="PDBsum" id="4EUA"/>
<dbReference type="PDBsum" id="4EUB"/>
<dbReference type="PDBsum" id="4EUC"/>
<dbReference type="PDBsum" id="4EUD"/>
<dbReference type="PDBsum" id="5DDK"/>
<dbReference type="PDBsum" id="5DW4"/>
<dbReference type="PDBsum" id="5DW5"/>
<dbReference type="PDBsum" id="5DW6"/>
<dbReference type="PDBsum" id="5E5H"/>
<dbReference type="SMR" id="B3EY95"/>
<dbReference type="KEGG" id="ag:ACD85596"/>
<dbReference type="BioCyc" id="MetaCyc:MONOMER-17982"/>
<dbReference type="BRENDA" id="2.8.3.18">
    <property type="organism ID" value="33"/>
</dbReference>
<dbReference type="BRENDA" id="2.8.3.8">
    <property type="organism ID" value="33"/>
</dbReference>
<dbReference type="BRENDA" id="6.2.1.5">
    <property type="organism ID" value="33"/>
</dbReference>
<dbReference type="SABIO-RK" id="B3EY95"/>
<dbReference type="UniPathway" id="UPA00340"/>
<dbReference type="EvolutionaryTrace" id="B3EY95"/>
<dbReference type="GO" id="GO:0008775">
    <property type="term" value="F:acetate CoA-transferase activity"/>
    <property type="evidence" value="ECO:0007669"/>
    <property type="project" value="InterPro"/>
</dbReference>
<dbReference type="GO" id="GO:0003986">
    <property type="term" value="F:acetyl-CoA hydrolase activity"/>
    <property type="evidence" value="ECO:0007669"/>
    <property type="project" value="TreeGrafter"/>
</dbReference>
<dbReference type="GO" id="GO:0016740">
    <property type="term" value="F:transferase activity"/>
    <property type="evidence" value="ECO:0000314"/>
    <property type="project" value="UniProtKB"/>
</dbReference>
<dbReference type="GO" id="GO:0045733">
    <property type="term" value="P:acetate catabolic process"/>
    <property type="evidence" value="ECO:0000314"/>
    <property type="project" value="UniProtKB"/>
</dbReference>
<dbReference type="GO" id="GO:0019427">
    <property type="term" value="P:acetyl-CoA biosynthetic process from acetate"/>
    <property type="evidence" value="ECO:0000314"/>
    <property type="project" value="UniProtKB"/>
</dbReference>
<dbReference type="GO" id="GO:1901289">
    <property type="term" value="P:succinyl-CoA catabolic process"/>
    <property type="evidence" value="ECO:0000314"/>
    <property type="project" value="UniProtKB"/>
</dbReference>
<dbReference type="FunFam" id="3.40.1080.20:FF:000001">
    <property type="entry name" value="Acetyl-CoA hydrolase Ach1"/>
    <property type="match status" value="1"/>
</dbReference>
<dbReference type="Gene3D" id="3.40.1080.20">
    <property type="entry name" value="Acetyl-CoA hydrolase/transferase C-terminal domain"/>
    <property type="match status" value="1"/>
</dbReference>
<dbReference type="Gene3D" id="3.40.1080.10">
    <property type="entry name" value="Glutaconate Coenzyme A-transferase"/>
    <property type="match status" value="1"/>
</dbReference>
<dbReference type="InterPro" id="IPR026888">
    <property type="entry name" value="AcetylCoA_hyd_C"/>
</dbReference>
<dbReference type="InterPro" id="IPR038460">
    <property type="entry name" value="AcetylCoA_hyd_C_sf"/>
</dbReference>
<dbReference type="InterPro" id="IPR046433">
    <property type="entry name" value="ActCoA_hydro"/>
</dbReference>
<dbReference type="InterPro" id="IPR003702">
    <property type="entry name" value="ActCoA_hydro_N"/>
</dbReference>
<dbReference type="InterPro" id="IPR037171">
    <property type="entry name" value="NagB/RpiA_transferase-like"/>
</dbReference>
<dbReference type="InterPro" id="IPR017821">
    <property type="entry name" value="Succinate_CoA_transferase"/>
</dbReference>
<dbReference type="NCBIfam" id="TIGR03458">
    <property type="entry name" value="YgfH_subfam"/>
    <property type="match status" value="1"/>
</dbReference>
<dbReference type="PANTHER" id="PTHR43609">
    <property type="entry name" value="ACETYL-COA HYDROLASE"/>
    <property type="match status" value="1"/>
</dbReference>
<dbReference type="PANTHER" id="PTHR43609:SF1">
    <property type="entry name" value="ACETYL-COA HYDROLASE"/>
    <property type="match status" value="1"/>
</dbReference>
<dbReference type="Pfam" id="PF13336">
    <property type="entry name" value="AcetylCoA_hyd_C"/>
    <property type="match status" value="1"/>
</dbReference>
<dbReference type="Pfam" id="PF02550">
    <property type="entry name" value="AcetylCoA_hydro"/>
    <property type="match status" value="1"/>
</dbReference>
<dbReference type="SUPFAM" id="SSF100950">
    <property type="entry name" value="NagB/RpiA/CoA transferase-like"/>
    <property type="match status" value="2"/>
</dbReference>
<comment type="function">
    <text evidence="1 2 3 4">Utilizes succinyl-CoA to convert toxic acetate to acetyl-CoA and succinate. Required for growth on acetic acid and for resistance to high levels of acetic acid. Also has low activity with acetoacetate as substrate.</text>
</comment>
<comment type="catalytic activity">
    <reaction evidence="1 2 4">
        <text>succinyl-CoA + acetate = succinate + acetyl-CoA</text>
        <dbReference type="Rhea" id="RHEA:35711"/>
        <dbReference type="ChEBI" id="CHEBI:30031"/>
        <dbReference type="ChEBI" id="CHEBI:30089"/>
        <dbReference type="ChEBI" id="CHEBI:57288"/>
        <dbReference type="ChEBI" id="CHEBI:57292"/>
        <dbReference type="EC" id="2.8.3.18"/>
    </reaction>
</comment>
<comment type="activity regulation">
    <text evidence="1">Subject to competitive inhibition by coenzyme A (CoA).</text>
</comment>
<comment type="biophysicochemical properties">
    <kinetics>
        <KM evidence="1">70 mM for acetate</KM>
        <KM evidence="1">22.1 mM for succinyl-CoA</KM>
        <KM evidence="1">22.3 mM for acetyl-CoA</KM>
        <KM evidence="1">0.9 mM for succinate</KM>
        <KM evidence="1">130 mM for acetoacetate</KM>
        <text evidence="1">kcat is 280 sec(-1) with acetate. kcat is 201 sec(-1) with succinyl-CoA. kcat is 75 sec(-1) with acetyl-CoA. kcat is 36.5 sec(-1) with acetoacetate. kcat is 70.9 sec(-1) with succinate.</text>
    </kinetics>
</comment>
<comment type="pathway">
    <text evidence="1 4">Metabolic intermediate biosynthesis; acetyl-CoA biosynthesis.</text>
</comment>
<comment type="subunit">
    <text evidence="1 2">Homodimer.</text>
</comment>
<comment type="induction">
    <text evidence="4">Expressed at intermediate levels during the first growth phase, when ethanol is metabolized and acetic acid accumulates in the growth medium. Up-regulated during the second growth phase, when acetate is catabolized.</text>
</comment>
<comment type="disruption phenotype">
    <text evidence="3">Cells cannot grow on acetate and have lost the resistance to high levels of acetate, a characteristic of wild-type A.aceti.</text>
</comment>
<comment type="similarity">
    <text evidence="8">Belongs to the acetyl-CoA hydrolase/transferase family.</text>
</comment>
<comment type="sequence caution" evidence="8">
    <conflict type="frameshift">
        <sequence resource="EMBL-CDS" id="BAA02549"/>
    </conflict>
</comment>
<feature type="chain" id="PRO_0000430783" description="Succinyl-CoA:acetate CoA-transferase">
    <location>
        <begin position="1"/>
        <end position="505"/>
    </location>
</feature>
<feature type="active site" description="5-glutamyl coenzyme A thioester intermediate" evidence="2">
    <location>
        <position position="294"/>
    </location>
</feature>
<feature type="binding site" evidence="2">
    <location>
        <begin position="269"/>
        <end position="273"/>
    </location>
    <ligand>
        <name>CoA</name>
        <dbReference type="ChEBI" id="CHEBI:57287"/>
    </ligand>
</feature>
<feature type="binding site" evidence="2">
    <location>
        <position position="364"/>
    </location>
    <ligand>
        <name>CoA</name>
        <dbReference type="ChEBI" id="CHEBI:57287"/>
    </ligand>
</feature>
<feature type="binding site" evidence="2">
    <location>
        <position position="384"/>
    </location>
    <ligand>
        <name>CoA</name>
        <dbReference type="ChEBI" id="CHEBI:57287"/>
    </ligand>
</feature>
<feature type="binding site" evidence="2">
    <location>
        <position position="388"/>
    </location>
    <ligand>
        <name>CoA</name>
        <dbReference type="ChEBI" id="CHEBI:57287"/>
    </ligand>
</feature>
<feature type="binding site" evidence="2">
    <location>
        <position position="408"/>
    </location>
    <ligand>
        <name>CoA</name>
        <dbReference type="ChEBI" id="CHEBI:57287"/>
    </ligand>
</feature>
<feature type="mutagenesis site" description="Abolishes enzyme activity." evidence="2">
    <original>E</original>
    <variation>A</variation>
    <location>
        <position position="294"/>
    </location>
</feature>
<feature type="mutagenesis site" description="Strongly impaired protein solubility." evidence="4">
    <original>C</original>
    <variation>Y</variation>
    <location>
        <position position="357"/>
    </location>
</feature>
<feature type="mutagenesis site" description="Abolishes protein solubility." evidence="2">
    <original>E</original>
    <variation>A</variation>
    <variation>Q</variation>
    <location>
        <position position="435"/>
    </location>
</feature>
<feature type="sequence conflict" description="In Ref. 3; AGG68324." ref="3">
    <original>C</original>
    <variation>Y</variation>
    <location>
        <position position="357"/>
    </location>
</feature>
<feature type="helix" evidence="12">
    <location>
        <begin position="9"/>
        <end position="13"/>
    </location>
</feature>
<feature type="helix" evidence="12">
    <location>
        <begin position="17"/>
        <end position="21"/>
    </location>
</feature>
<feature type="strand" evidence="12">
    <location>
        <begin position="29"/>
        <end position="32"/>
    </location>
</feature>
<feature type="helix" evidence="12">
    <location>
        <begin position="43"/>
        <end position="57"/>
    </location>
</feature>
<feature type="strand" evidence="12">
    <location>
        <begin position="64"/>
        <end position="67"/>
    </location>
</feature>
<feature type="turn" evidence="12">
    <location>
        <begin position="74"/>
        <end position="76"/>
    </location>
</feature>
<feature type="helix" evidence="12">
    <location>
        <begin position="77"/>
        <end position="82"/>
    </location>
</feature>
<feature type="strand" evidence="12">
    <location>
        <begin position="86"/>
        <end position="91"/>
    </location>
</feature>
<feature type="helix" evidence="12">
    <location>
        <begin position="96"/>
        <end position="103"/>
    </location>
</feature>
<feature type="strand" evidence="12">
    <location>
        <begin position="106"/>
        <end position="109"/>
    </location>
</feature>
<feature type="helix" evidence="12">
    <location>
        <begin position="114"/>
        <end position="116"/>
    </location>
</feature>
<feature type="helix" evidence="12">
    <location>
        <begin position="117"/>
        <end position="123"/>
    </location>
</feature>
<feature type="turn" evidence="12">
    <location>
        <begin position="124"/>
        <end position="126"/>
    </location>
</feature>
<feature type="strand" evidence="12">
    <location>
        <begin position="131"/>
        <end position="139"/>
    </location>
</feature>
<feature type="strand" evidence="12">
    <location>
        <begin position="145"/>
        <end position="147"/>
    </location>
</feature>
<feature type="helix" evidence="12">
    <location>
        <begin position="154"/>
        <end position="160"/>
    </location>
</feature>
<feature type="strand" evidence="12">
    <location>
        <begin position="162"/>
        <end position="169"/>
    </location>
</feature>
<feature type="helix" evidence="12">
    <location>
        <begin position="174"/>
        <end position="176"/>
    </location>
</feature>
<feature type="strand" evidence="12">
    <location>
        <begin position="179"/>
        <end position="182"/>
    </location>
</feature>
<feature type="strand" evidence="12">
    <location>
        <begin position="187"/>
        <end position="192"/>
    </location>
</feature>
<feature type="strand" evidence="12">
    <location>
        <begin position="206"/>
        <end position="210"/>
    </location>
</feature>
<feature type="helix" evidence="12">
    <location>
        <begin position="214"/>
        <end position="216"/>
    </location>
</feature>
<feature type="strand" evidence="12">
    <location>
        <begin position="217"/>
        <end position="223"/>
    </location>
</feature>
<feature type="helix" evidence="12">
    <location>
        <begin position="237"/>
        <end position="255"/>
    </location>
</feature>
<feature type="strand" evidence="11">
    <location>
        <begin position="266"/>
        <end position="268"/>
    </location>
</feature>
<feature type="helix" evidence="12">
    <location>
        <begin position="272"/>
        <end position="283"/>
    </location>
</feature>
<feature type="strand" evidence="12">
    <location>
        <begin position="288"/>
        <end position="296"/>
    </location>
</feature>
<feature type="helix" evidence="12">
    <location>
        <begin position="298"/>
        <end position="306"/>
    </location>
</feature>
<feature type="strand" evidence="12">
    <location>
        <begin position="307"/>
        <end position="317"/>
    </location>
</feature>
<feature type="helix" evidence="12">
    <location>
        <begin position="321"/>
        <end position="329"/>
    </location>
</feature>
<feature type="helix" evidence="12">
    <location>
        <begin position="331"/>
        <end position="335"/>
    </location>
</feature>
<feature type="strand" evidence="12">
    <location>
        <begin position="338"/>
        <end position="342"/>
    </location>
</feature>
<feature type="helix" evidence="12">
    <location>
        <begin position="343"/>
        <end position="346"/>
    </location>
</feature>
<feature type="helix" evidence="12">
    <location>
        <begin position="349"/>
        <end position="355"/>
    </location>
</feature>
<feature type="strand" evidence="12">
    <location>
        <begin position="358"/>
        <end position="361"/>
    </location>
</feature>
<feature type="strand" evidence="12">
    <location>
        <begin position="364"/>
        <end position="367"/>
    </location>
</feature>
<feature type="strand" evidence="12">
    <location>
        <begin position="372"/>
        <end position="377"/>
    </location>
</feature>
<feature type="turn" evidence="12">
    <location>
        <begin position="378"/>
        <end position="380"/>
    </location>
</feature>
<feature type="helix" evidence="12">
    <location>
        <begin position="389"/>
        <end position="395"/>
    </location>
</feature>
<feature type="strand" evidence="12">
    <location>
        <begin position="396"/>
        <end position="402"/>
    </location>
</feature>
<feature type="strand" evidence="12">
    <location>
        <begin position="405"/>
        <end position="407"/>
    </location>
</feature>
<feature type="turn" evidence="12">
    <location>
        <begin position="408"/>
        <end position="411"/>
    </location>
</feature>
<feature type="strand" evidence="12">
    <location>
        <begin position="412"/>
        <end position="418"/>
    </location>
</feature>
<feature type="helix" evidence="12">
    <location>
        <begin position="426"/>
        <end position="428"/>
    </location>
</feature>
<feature type="strand" evidence="12">
    <location>
        <begin position="431"/>
        <end position="434"/>
    </location>
</feature>
<feature type="strand" evidence="12">
    <location>
        <begin position="437"/>
        <end position="440"/>
    </location>
</feature>
<feature type="helix" evidence="12">
    <location>
        <begin position="446"/>
        <end position="456"/>
    </location>
</feature>
<feature type="turn" evidence="12">
    <location>
        <begin position="460"/>
        <end position="462"/>
    </location>
</feature>
<feature type="helix" evidence="12">
    <location>
        <begin position="463"/>
        <end position="476"/>
    </location>
</feature>
<feature type="strand" evidence="12">
    <location>
        <begin position="478"/>
        <end position="482"/>
    </location>
</feature>
<feature type="turn" evidence="12">
    <location>
        <begin position="486"/>
        <end position="490"/>
    </location>
</feature>
<feature type="helix" evidence="12">
    <location>
        <begin position="491"/>
        <end position="499"/>
    </location>
</feature>
<proteinExistence type="evidence at protein level"/>
<name>SCACT_ACEAC</name>
<organism evidence="9">
    <name type="scientific">Acetobacter aceti</name>
    <dbReference type="NCBI Taxonomy" id="435"/>
    <lineage>
        <taxon>Bacteria</taxon>
        <taxon>Pseudomonadati</taxon>
        <taxon>Pseudomonadota</taxon>
        <taxon>Alphaproteobacteria</taxon>
        <taxon>Acetobacterales</taxon>
        <taxon>Acetobacteraceae</taxon>
        <taxon>Acetobacter</taxon>
        <taxon>Acetobacter subgen. Acetobacter</taxon>
    </lineage>
</organism>
<evidence type="ECO:0000269" key="1">
    <source>
    </source>
</evidence>
<evidence type="ECO:0000269" key="2">
    <source>
    </source>
</evidence>
<evidence type="ECO:0000269" key="3">
    <source ref="1"/>
</evidence>
<evidence type="ECO:0000269" key="4">
    <source ref="3"/>
</evidence>
<evidence type="ECO:0000303" key="5">
    <source>
    </source>
</evidence>
<evidence type="ECO:0000303" key="6">
    <source>
    </source>
</evidence>
<evidence type="ECO:0000303" key="7">
    <source ref="3"/>
</evidence>
<evidence type="ECO:0000305" key="8"/>
<evidence type="ECO:0000312" key="9">
    <source>
        <dbReference type="EMBL" id="ACD85596.1"/>
    </source>
</evidence>
<evidence type="ECO:0000312" key="10">
    <source>
        <dbReference type="EMBL" id="BAA02549.1"/>
    </source>
</evidence>
<evidence type="ECO:0007829" key="11">
    <source>
        <dbReference type="PDB" id="4EU3"/>
    </source>
</evidence>
<evidence type="ECO:0007829" key="12">
    <source>
        <dbReference type="PDB" id="4EU9"/>
    </source>
</evidence>
<protein>
    <recommendedName>
        <fullName>Succinyl-CoA:acetate CoA-transferase</fullName>
        <ecNumber evidence="1 2 4">2.8.3.18</ecNumber>
    </recommendedName>
    <alternativeName>
        <fullName evidence="5 6">Succinyl-coenzyme A (CoA):acetate CoA-transferase</fullName>
        <shortName evidence="5">SCACT</shortName>
    </alternativeName>
</protein>
<reference key="1">
    <citation type="journal article" date="1993" name="J. Ferment. Bioeng.">
        <title>The aarC gene responsible for acetic acid assimilation confers acetic acid resistance on Acetobacter aceti.</title>
        <authorList>
            <person name="Fukaya M."/>
            <person name="Takemura H."/>
            <person name="Tayama K."/>
            <person name="Okumura H."/>
            <person name="Kawamura Y."/>
            <person name="Horinouchi S."/>
            <person name="Beppu T."/>
        </authorList>
    </citation>
    <scope>NUCLEOTIDE SEQUENCE [GENOMIC DNA]</scope>
    <scope>IDENTIFICATION</scope>
    <scope>DISRUPTION PHENOTYPE</scope>
    <scope>FUNCTION</scope>
    <source>
        <strain evidence="10">1023</strain>
    </source>
</reference>
<reference key="2">
    <citation type="journal article" date="2008" name="J. Bacteriol.">
        <title>A specialized citric acid cycle requiring succinyl-coenzyme A (CoA):acetate CoA-transferase (AarC) confers acetic acid resistance on the acidophile Acetobacter aceti.</title>
        <authorList>
            <person name="Mullins E.A."/>
            <person name="Francois J.A."/>
            <person name="Kappock T.J."/>
        </authorList>
    </citation>
    <scope>NUCLEOTIDE SEQUENCE [GENOMIC DNA]</scope>
    <scope>FUNCTION</scope>
    <scope>CATALYTIC ACTIVITY</scope>
    <scope>SUBUNIT</scope>
    <scope>PATHWAY</scope>
    <scope>ACTIVITY REGULATION</scope>
    <scope>BIOPHYSICOCHEMICAL PROPERTIES</scope>
    <source>
        <strain evidence="5">1023</strain>
    </source>
</reference>
<reference key="3">
    <citation type="journal article" date="2013" name="Acetic Acid Bacteria">
        <title>Functional analysis of the acetic acid resistance (aar) gene cluster in Acetobacter aceti strain 1023.</title>
        <authorList>
            <person name="Mullins E.A."/>
            <person name="Kappock T.J."/>
        </authorList>
    </citation>
    <scope>NUCLEOTIDE SEQUENCE [GENOMIC DNA]</scope>
    <scope>FUNCTION</scope>
    <scope>CATALYTIC ACTIVITY</scope>
    <scope>MUTAGENESIS OF CYS-357</scope>
    <scope>PATHWAY</scope>
    <scope>INDUCTION</scope>
    <source>
        <strain evidence="7">1023</strain>
    </source>
</reference>
<reference key="4">
    <citation type="journal article" date="2012" name="Biochemistry">
        <title>Crystal structures of Acetobacter aceti succinyl-coenzyme A (CoA):acetate CoA-transferase reveal specificity determinants and illustrate the mechanism used by class I CoA-transferases.</title>
        <authorList>
            <person name="Mullins E.A."/>
            <person name="Kappock T.J."/>
        </authorList>
    </citation>
    <scope>X-RAY CRYSTALLOGRAPHY (1.48 ANGSTROMS) IN COMPLEXES WITH COENZYME A AND ACETATE</scope>
    <scope>FUNCTION</scope>
    <scope>CATALYTIC ACTIVITY</scope>
    <scope>ACTIVE SITE</scope>
    <scope>SUBUNIT</scope>
    <scope>MUTAGENESIS OF GLU-435</scope>
</reference>
<accession>B3EY95</accession>
<accession>M4MDU8</accession>
<accession>Q43882</accession>
<sequence>MTERIRNVALRSKVCPAETASELIKHGDVVGTSGFTGAGYPKEVPKALAQRMEAAHDRGEKYQISLITGASTGPQLDGELAKANGVYFRSPFNTDATMRNRINAGETEYFDNHLGQVAGRAVQGNYGKFNIALVEATAITEDGGIVPTSSVGNSQTFLNLAEKVIIEVNEWQNPMLEGIHDIWDGNVSGVPTRDIVPIVRADQRVGGPVLRVNPDKIAAIVRTNDRDRNAPFAAPDETAKAIAGYLLDFFGHEVKQNRLPPSLLPLQSGVGNVANAVLEGLKEGPFENLVGYSEVIQDGMLAMLDSGRMRIASASSFSLSPEAAEEINNRMDFFRSKIILRQQDVSNSPGIIRRLGCIAMNGMIEADIYGNVNSTRVMGSKMMNGIGGSGDFARSSYLSIFLSPSTAKGGKISAIVPMAAHVDHIMQDAQIFVTEQGLADLRGLSPVQRAREIISKCAHPDYRPMLQDYFDRALKNSFGKHTPHLLTEALSWHQRFIDTGTMLPS</sequence>
<keyword id="KW-0002">3D-structure</keyword>
<keyword id="KW-0808">Transferase</keyword>